<dbReference type="EMBL" id="AP008226">
    <property type="protein sequence ID" value="BAD70000.1"/>
    <property type="molecule type" value="Genomic_DNA"/>
</dbReference>
<dbReference type="PIR" id="A00216">
    <property type="entry name" value="FETWT"/>
</dbReference>
<dbReference type="RefSeq" id="WP_008630832.1">
    <property type="nucleotide sequence ID" value="NC_006461.1"/>
</dbReference>
<dbReference type="RefSeq" id="YP_143443.1">
    <property type="nucleotide sequence ID" value="NC_006461.1"/>
</dbReference>
<dbReference type="PDB" id="1H98">
    <property type="method" value="X-ray"/>
    <property type="resolution" value="1.64 A"/>
    <property type="chains" value="A=2-79"/>
</dbReference>
<dbReference type="PDBsum" id="1H98"/>
<dbReference type="SMR" id="P03942"/>
<dbReference type="EnsemblBacteria" id="BAD70000">
    <property type="protein sequence ID" value="BAD70000"/>
    <property type="gene ID" value="BAD70000"/>
</dbReference>
<dbReference type="GeneID" id="3169609"/>
<dbReference type="KEGG" id="ttj:TTHA0177"/>
<dbReference type="PATRIC" id="fig|300852.9.peg.175"/>
<dbReference type="eggNOG" id="COG1146">
    <property type="taxonomic scope" value="Bacteria"/>
</dbReference>
<dbReference type="HOGENOM" id="CLU_139698_0_1_0"/>
<dbReference type="PhylomeDB" id="P03942"/>
<dbReference type="EvolutionaryTrace" id="P03942"/>
<dbReference type="Proteomes" id="UP000000532">
    <property type="component" value="Chromosome"/>
</dbReference>
<dbReference type="GO" id="GO:0051538">
    <property type="term" value="F:3 iron, 4 sulfur cluster binding"/>
    <property type="evidence" value="ECO:0007669"/>
    <property type="project" value="UniProtKB-KW"/>
</dbReference>
<dbReference type="GO" id="GO:0051539">
    <property type="term" value="F:4 iron, 4 sulfur cluster binding"/>
    <property type="evidence" value="ECO:0007669"/>
    <property type="project" value="UniProtKB-KW"/>
</dbReference>
<dbReference type="GO" id="GO:0009055">
    <property type="term" value="F:electron transfer activity"/>
    <property type="evidence" value="ECO:0007669"/>
    <property type="project" value="InterPro"/>
</dbReference>
<dbReference type="GO" id="GO:0046872">
    <property type="term" value="F:metal ion binding"/>
    <property type="evidence" value="ECO:0007669"/>
    <property type="project" value="UniProtKB-KW"/>
</dbReference>
<dbReference type="Gene3D" id="3.30.70.20">
    <property type="match status" value="1"/>
</dbReference>
<dbReference type="InterPro" id="IPR017896">
    <property type="entry name" value="4Fe4S_Fe-S-bd"/>
</dbReference>
<dbReference type="InterPro" id="IPR017900">
    <property type="entry name" value="4Fe4S_Fe_S_CS"/>
</dbReference>
<dbReference type="InterPro" id="IPR000813">
    <property type="entry name" value="7Fe_ferredoxin"/>
</dbReference>
<dbReference type="InterPro" id="IPR050294">
    <property type="entry name" value="RnfB_subfamily"/>
</dbReference>
<dbReference type="PANTHER" id="PTHR42859:SF2">
    <property type="entry name" value="FERREDOXIN"/>
    <property type="match status" value="1"/>
</dbReference>
<dbReference type="PANTHER" id="PTHR42859">
    <property type="entry name" value="OXIDOREDUCTASE"/>
    <property type="match status" value="1"/>
</dbReference>
<dbReference type="Pfam" id="PF00037">
    <property type="entry name" value="Fer4"/>
    <property type="match status" value="1"/>
</dbReference>
<dbReference type="PRINTS" id="PR00354">
    <property type="entry name" value="7FE8SFRDOXIN"/>
</dbReference>
<dbReference type="SUPFAM" id="SSF54862">
    <property type="entry name" value="4Fe-4S ferredoxins"/>
    <property type="match status" value="1"/>
</dbReference>
<dbReference type="PROSITE" id="PS00198">
    <property type="entry name" value="4FE4S_FER_1"/>
    <property type="match status" value="1"/>
</dbReference>
<dbReference type="PROSITE" id="PS51379">
    <property type="entry name" value="4FE4S_FER_2"/>
    <property type="match status" value="2"/>
</dbReference>
<reference key="1">
    <citation type="submission" date="2004-11" db="EMBL/GenBank/DDBJ databases">
        <title>Complete genome sequence of Thermus thermophilus HB8.</title>
        <authorList>
            <person name="Masui R."/>
            <person name="Kurokawa K."/>
            <person name="Nakagawa N."/>
            <person name="Tokunaga F."/>
            <person name="Koyama Y."/>
            <person name="Shibata T."/>
            <person name="Oshima T."/>
            <person name="Yokoyama S."/>
            <person name="Yasunaga T."/>
            <person name="Kuramitsu S."/>
        </authorList>
    </citation>
    <scope>NUCLEOTIDE SEQUENCE [LARGE SCALE GENOMIC DNA]</scope>
    <source>
        <strain>ATCC 27634 / DSM 579 / HB8</strain>
    </source>
</reference>
<reference key="2">
    <citation type="journal article" date="1981" name="Biochim. Biophys. Acta">
        <title>Purification, some properties and amino acid sequence of Thermus thermophilus HB8 ferredoxin.</title>
        <authorList>
            <person name="Sato S."/>
            <person name="Nakazawa K."/>
            <person name="Hon-Nami K."/>
            <person name="Oshima T."/>
        </authorList>
    </citation>
    <scope>PROTEIN SEQUENCE OF 2-79</scope>
</reference>
<reference key="3">
    <citation type="journal article" date="2001" name="J. Biol. Inorg. Chem.">
        <title>New insights into the thermostability of bacterial ferredoxins: high-resolution crystal structure of the seven-iron ferredoxin from Thermus thermophilus.</title>
        <authorList>
            <person name="Macedo-Ribeiro S."/>
            <person name="Martins B.M."/>
            <person name="Pereira P.J."/>
            <person name="Buse G."/>
            <person name="Huber R."/>
            <person name="Soulimane T."/>
        </authorList>
    </citation>
    <scope>PROTEIN SEQUENCE OF 2-79</scope>
    <scope>X-RAY CRYSTALLOGRAPHY (1.64 ANGSTROMS)</scope>
</reference>
<reference key="4">
    <citation type="journal article" date="1983" name="J. Biol. Chem.">
        <title>Studies of the ferredoxin from Thermus thermophilus.</title>
        <authorList>
            <person name="Hille R."/>
            <person name="Yoshida T."/>
            <person name="Tarr G.E."/>
            <person name="Williams C.H. Jr."/>
            <person name="Ludwig M.I."/>
            <person name="Fee J.A."/>
            <person name="Kent T.A."/>
            <person name="Huynh B.H."/>
            <person name="Munck E."/>
        </authorList>
    </citation>
    <scope>AMINO-ACID COMPOSITION</scope>
    <source>
        <strain>ATCC 696</strain>
    </source>
</reference>
<accession>P03942</accession>
<accession>Q5SLW6</accession>
<comment type="function">
    <text>Ferredoxins are iron-sulfur proteins that transfer electrons in a wide variety of metabolic reactions.</text>
</comment>
<comment type="cofactor">
    <cofactor>
        <name>[4Fe-4S] cluster</name>
        <dbReference type="ChEBI" id="CHEBI:49883"/>
    </cofactor>
    <text>Binds 1 [4Fe-4S] cluster.</text>
</comment>
<comment type="cofactor">
    <cofactor>
        <name>[3Fe-4S] cluster</name>
        <dbReference type="ChEBI" id="CHEBI:21137"/>
    </cofactor>
    <text>Binds 1 [3Fe-4S] cluster.</text>
</comment>
<proteinExistence type="evidence at protein level"/>
<feature type="initiator methionine" description="Removed" evidence="2 3">
    <location>
        <position position="1"/>
    </location>
</feature>
<feature type="chain" id="PRO_0000159108" description="Ferredoxin">
    <location>
        <begin position="2"/>
        <end position="79"/>
    </location>
</feature>
<feature type="domain" description="4Fe-4S ferredoxin-type 1" evidence="1">
    <location>
        <begin position="2"/>
        <end position="30"/>
    </location>
</feature>
<feature type="domain" description="4Fe-4S ferredoxin-type 2" evidence="1">
    <location>
        <begin position="31"/>
        <end position="60"/>
    </location>
</feature>
<feature type="binding site">
    <location>
        <position position="9"/>
    </location>
    <ligand>
        <name>[3Fe-4S] cluster</name>
        <dbReference type="ChEBI" id="CHEBI:21137"/>
    </ligand>
</feature>
<feature type="binding site">
    <location>
        <position position="17"/>
    </location>
    <ligand>
        <name>[3Fe-4S] cluster</name>
        <dbReference type="ChEBI" id="CHEBI:21137"/>
    </ligand>
</feature>
<feature type="binding site">
    <location>
        <position position="21"/>
    </location>
    <ligand>
        <name>[4Fe-4S] cluster</name>
        <dbReference type="ChEBI" id="CHEBI:49883"/>
    </ligand>
</feature>
<feature type="binding site">
    <location>
        <position position="40"/>
    </location>
    <ligand>
        <name>[4Fe-4S] cluster</name>
        <dbReference type="ChEBI" id="CHEBI:49883"/>
    </ligand>
</feature>
<feature type="binding site">
    <location>
        <position position="43"/>
    </location>
    <ligand>
        <name>[4Fe-4S] cluster</name>
        <dbReference type="ChEBI" id="CHEBI:49883"/>
    </ligand>
</feature>
<feature type="binding site">
    <location>
        <position position="46"/>
    </location>
    <ligand>
        <name>[4Fe-4S] cluster</name>
        <dbReference type="ChEBI" id="CHEBI:49883"/>
    </ligand>
</feature>
<feature type="binding site">
    <location>
        <position position="50"/>
    </location>
    <ligand>
        <name>[3Fe-4S] cluster</name>
        <dbReference type="ChEBI" id="CHEBI:21137"/>
    </ligand>
</feature>
<feature type="sequence conflict" description="In Ref. 3; AA sequence." evidence="4" ref="3">
    <original>E</original>
    <variation>Q</variation>
    <location>
        <position position="7"/>
    </location>
</feature>
<feature type="strand" evidence="5">
    <location>
        <begin position="3"/>
        <end position="5"/>
    </location>
</feature>
<feature type="helix" evidence="5">
    <location>
        <begin position="7"/>
        <end position="9"/>
    </location>
</feature>
<feature type="turn" evidence="5">
    <location>
        <begin position="10"/>
        <end position="12"/>
    </location>
</feature>
<feature type="helix" evidence="5">
    <location>
        <begin position="16"/>
        <end position="20"/>
    </location>
</feature>
<feature type="strand" evidence="5">
    <location>
        <begin position="26"/>
        <end position="28"/>
    </location>
</feature>
<feature type="strand" evidence="5">
    <location>
        <begin position="30"/>
        <end position="35"/>
    </location>
</feature>
<feature type="turn" evidence="5">
    <location>
        <begin position="37"/>
        <end position="39"/>
    </location>
</feature>
<feature type="helix" evidence="5">
    <location>
        <begin position="46"/>
        <end position="49"/>
    </location>
</feature>
<feature type="strand" evidence="5">
    <location>
        <begin position="55"/>
        <end position="57"/>
    </location>
</feature>
<feature type="helix" evidence="5">
    <location>
        <begin position="58"/>
        <end position="60"/>
    </location>
</feature>
<feature type="helix" evidence="5">
    <location>
        <begin position="63"/>
        <end position="66"/>
    </location>
</feature>
<feature type="helix" evidence="5">
    <location>
        <begin position="67"/>
        <end position="75"/>
    </location>
</feature>
<protein>
    <recommendedName>
        <fullName>Ferredoxin</fullName>
    </recommendedName>
</protein>
<name>FER_THET8</name>
<evidence type="ECO:0000255" key="1">
    <source>
        <dbReference type="PROSITE-ProRule" id="PRU00711"/>
    </source>
</evidence>
<evidence type="ECO:0000269" key="2">
    <source>
    </source>
</evidence>
<evidence type="ECO:0000269" key="3">
    <source>
    </source>
</evidence>
<evidence type="ECO:0000305" key="4"/>
<evidence type="ECO:0007829" key="5">
    <source>
        <dbReference type="PDB" id="1H98"/>
    </source>
</evidence>
<gene>
    <name type="ordered locus">TTHA0177</name>
</gene>
<organism>
    <name type="scientific">Thermus thermophilus (strain ATCC 27634 / DSM 579 / HB8)</name>
    <dbReference type="NCBI Taxonomy" id="300852"/>
    <lineage>
        <taxon>Bacteria</taxon>
        <taxon>Thermotogati</taxon>
        <taxon>Deinococcota</taxon>
        <taxon>Deinococci</taxon>
        <taxon>Thermales</taxon>
        <taxon>Thermaceae</taxon>
        <taxon>Thermus</taxon>
    </lineage>
</organism>
<keyword id="KW-0002">3D-structure</keyword>
<keyword id="KW-0003">3Fe-4S</keyword>
<keyword id="KW-0004">4Fe-4S</keyword>
<keyword id="KW-0903">Direct protein sequencing</keyword>
<keyword id="KW-0249">Electron transport</keyword>
<keyword id="KW-0408">Iron</keyword>
<keyword id="KW-0411">Iron-sulfur</keyword>
<keyword id="KW-0479">Metal-binding</keyword>
<keyword id="KW-1185">Reference proteome</keyword>
<keyword id="KW-0677">Repeat</keyword>
<keyword id="KW-0813">Transport</keyword>
<sequence length="79" mass="8818">MPHVICEPCIGVKDQSCVEVCPVECIYDGGDQFYIHPEECIDCGACVPACPVNAIYPEEDVPEQWKSYIEKNRKLAGLE</sequence>